<proteinExistence type="inferred from homology"/>
<reference key="1">
    <citation type="journal article" date="2002" name="Nature">
        <title>The genome sequence of Schizosaccharomyces pombe.</title>
        <authorList>
            <person name="Wood V."/>
            <person name="Gwilliam R."/>
            <person name="Rajandream M.A."/>
            <person name="Lyne M.H."/>
            <person name="Lyne R."/>
            <person name="Stewart A."/>
            <person name="Sgouros J.G."/>
            <person name="Peat N."/>
            <person name="Hayles J."/>
            <person name="Baker S.G."/>
            <person name="Basham D."/>
            <person name="Bowman S."/>
            <person name="Brooks K."/>
            <person name="Brown D."/>
            <person name="Brown S."/>
            <person name="Chillingworth T."/>
            <person name="Churcher C.M."/>
            <person name="Collins M."/>
            <person name="Connor R."/>
            <person name="Cronin A."/>
            <person name="Davis P."/>
            <person name="Feltwell T."/>
            <person name="Fraser A."/>
            <person name="Gentles S."/>
            <person name="Goble A."/>
            <person name="Hamlin N."/>
            <person name="Harris D.E."/>
            <person name="Hidalgo J."/>
            <person name="Hodgson G."/>
            <person name="Holroyd S."/>
            <person name="Hornsby T."/>
            <person name="Howarth S."/>
            <person name="Huckle E.J."/>
            <person name="Hunt S."/>
            <person name="Jagels K."/>
            <person name="James K.D."/>
            <person name="Jones L."/>
            <person name="Jones M."/>
            <person name="Leather S."/>
            <person name="McDonald S."/>
            <person name="McLean J."/>
            <person name="Mooney P."/>
            <person name="Moule S."/>
            <person name="Mungall K.L."/>
            <person name="Murphy L.D."/>
            <person name="Niblett D."/>
            <person name="Odell C."/>
            <person name="Oliver K."/>
            <person name="O'Neil S."/>
            <person name="Pearson D."/>
            <person name="Quail M.A."/>
            <person name="Rabbinowitsch E."/>
            <person name="Rutherford K.M."/>
            <person name="Rutter S."/>
            <person name="Saunders D."/>
            <person name="Seeger K."/>
            <person name="Sharp S."/>
            <person name="Skelton J."/>
            <person name="Simmonds M.N."/>
            <person name="Squares R."/>
            <person name="Squares S."/>
            <person name="Stevens K."/>
            <person name="Taylor K."/>
            <person name="Taylor R.G."/>
            <person name="Tivey A."/>
            <person name="Walsh S.V."/>
            <person name="Warren T."/>
            <person name="Whitehead S."/>
            <person name="Woodward J.R."/>
            <person name="Volckaert G."/>
            <person name="Aert R."/>
            <person name="Robben J."/>
            <person name="Grymonprez B."/>
            <person name="Weltjens I."/>
            <person name="Vanstreels E."/>
            <person name="Rieger M."/>
            <person name="Schaefer M."/>
            <person name="Mueller-Auer S."/>
            <person name="Gabel C."/>
            <person name="Fuchs M."/>
            <person name="Duesterhoeft A."/>
            <person name="Fritzc C."/>
            <person name="Holzer E."/>
            <person name="Moestl D."/>
            <person name="Hilbert H."/>
            <person name="Borzym K."/>
            <person name="Langer I."/>
            <person name="Beck A."/>
            <person name="Lehrach H."/>
            <person name="Reinhardt R."/>
            <person name="Pohl T.M."/>
            <person name="Eger P."/>
            <person name="Zimmermann W."/>
            <person name="Wedler H."/>
            <person name="Wambutt R."/>
            <person name="Purnelle B."/>
            <person name="Goffeau A."/>
            <person name="Cadieu E."/>
            <person name="Dreano S."/>
            <person name="Gloux S."/>
            <person name="Lelaure V."/>
            <person name="Mottier S."/>
            <person name="Galibert F."/>
            <person name="Aves S.J."/>
            <person name="Xiang Z."/>
            <person name="Hunt C."/>
            <person name="Moore K."/>
            <person name="Hurst S.M."/>
            <person name="Lucas M."/>
            <person name="Rochet M."/>
            <person name="Gaillardin C."/>
            <person name="Tallada V.A."/>
            <person name="Garzon A."/>
            <person name="Thode G."/>
            <person name="Daga R.R."/>
            <person name="Cruzado L."/>
            <person name="Jimenez J."/>
            <person name="Sanchez M."/>
            <person name="del Rey F."/>
            <person name="Benito J."/>
            <person name="Dominguez A."/>
            <person name="Revuelta J.L."/>
            <person name="Moreno S."/>
            <person name="Armstrong J."/>
            <person name="Forsburg S.L."/>
            <person name="Cerutti L."/>
            <person name="Lowe T."/>
            <person name="McCombie W.R."/>
            <person name="Paulsen I."/>
            <person name="Potashkin J."/>
            <person name="Shpakovski G.V."/>
            <person name="Ussery D."/>
            <person name="Barrell B.G."/>
            <person name="Nurse P."/>
        </authorList>
    </citation>
    <scope>NUCLEOTIDE SEQUENCE [LARGE SCALE GENOMIC DNA]</scope>
    <source>
        <strain>972 / ATCC 24843</strain>
    </source>
</reference>
<reference key="2">
    <citation type="journal article" date="2006" name="Nat. Biotechnol.">
        <title>ORFeome cloning and global analysis of protein localization in the fission yeast Schizosaccharomyces pombe.</title>
        <authorList>
            <person name="Matsuyama A."/>
            <person name="Arai R."/>
            <person name="Yashiroda Y."/>
            <person name="Shirai A."/>
            <person name="Kamata A."/>
            <person name="Sekido S."/>
            <person name="Kobayashi Y."/>
            <person name="Hashimoto A."/>
            <person name="Hamamoto M."/>
            <person name="Hiraoka Y."/>
            <person name="Horinouchi S."/>
            <person name="Yoshida M."/>
        </authorList>
    </citation>
    <scope>SUBCELLULAR LOCATION [LARGE SCALE ANALYSIS]</scope>
</reference>
<protein>
    <recommendedName>
        <fullName>Lysine--tRNA ligase, mitochondrial</fullName>
        <ecNumber>6.1.1.6</ecNumber>
    </recommendedName>
    <alternativeName>
        <fullName>Lysyl-tRNA synthetase</fullName>
        <shortName>LysRS</shortName>
    </alternativeName>
</protein>
<feature type="transit peptide" description="Mitochondrion" evidence="2">
    <location>
        <begin position="1"/>
        <end position="18"/>
    </location>
</feature>
<feature type="chain" id="PRO_0000315954" description="Lysine--tRNA ligase, mitochondrial">
    <location>
        <begin position="19"/>
        <end position="531"/>
    </location>
</feature>
<evidence type="ECO:0000269" key="1">
    <source>
    </source>
</evidence>
<evidence type="ECO:0000305" key="2"/>
<sequence length="531" mass="60286">MISRGLLSKGILSIIKRKNTGNLIPHVYYSEYHADIEERRKALGRLGISLYPSVTSDASTTTIPVIIEKWRNKITKSEIAMVRYTVCGRISSIRYSGSKLAFFDVLYGNKKLQVVFNKKNIGTEEEMKGKFIPRLKALQKGDCIQCSGNVGRSGSGELSIYATELPKLLSPCLHPIPVKLTNYEKRFEKRFVDMMSNTKSLELLEKRYRIIESIRKFFSERGFLEVETPILSHHFGGATARPFITSDIHKLPLTLRCAPELWLKQLVIGGMNRVFELGKNFRNEGIDATHNPEFTSCEAYCAYLNLEGMKKLTEELIRFICLTINGNLQISGQTVDLEKGFEVIEFIPALQKELNVELSPLDNSENCRKQLISIFKRCEIMLPKTCTVAHLLDKLFDSLVLKYNTSSPKFVINHPEVMSPLAKSDIKLYGAVEQRISKRFELYIGGYEICNAYEEENDPVAQYHKFQAQKYDRLQLGDDETPAPDSDFVHALEYGLPPTAGWGMGVDRLVMLMTGQSKISEILPFGSLRYV</sequence>
<name>SYKM_SCHPO</name>
<gene>
    <name type="primary">msk1</name>
    <name type="ORF">SPCC18.08</name>
</gene>
<accession>O74858</accession>
<keyword id="KW-0030">Aminoacyl-tRNA synthetase</keyword>
<keyword id="KW-0067">ATP-binding</keyword>
<keyword id="KW-0436">Ligase</keyword>
<keyword id="KW-0479">Metal-binding</keyword>
<keyword id="KW-0496">Mitochondrion</keyword>
<keyword id="KW-0547">Nucleotide-binding</keyword>
<keyword id="KW-0648">Protein biosynthesis</keyword>
<keyword id="KW-1185">Reference proteome</keyword>
<keyword id="KW-0809">Transit peptide</keyword>
<organism>
    <name type="scientific">Schizosaccharomyces pombe (strain 972 / ATCC 24843)</name>
    <name type="common">Fission yeast</name>
    <dbReference type="NCBI Taxonomy" id="284812"/>
    <lineage>
        <taxon>Eukaryota</taxon>
        <taxon>Fungi</taxon>
        <taxon>Dikarya</taxon>
        <taxon>Ascomycota</taxon>
        <taxon>Taphrinomycotina</taxon>
        <taxon>Schizosaccharomycetes</taxon>
        <taxon>Schizosaccharomycetales</taxon>
        <taxon>Schizosaccharomycetaceae</taxon>
        <taxon>Schizosaccharomyces</taxon>
    </lineage>
</organism>
<dbReference type="EC" id="6.1.1.6"/>
<dbReference type="EMBL" id="CU329672">
    <property type="protein sequence ID" value="CAA21422.1"/>
    <property type="molecule type" value="Genomic_DNA"/>
</dbReference>
<dbReference type="PIR" id="T41151">
    <property type="entry name" value="T41151"/>
</dbReference>
<dbReference type="RefSeq" id="NP_588387.1">
    <property type="nucleotide sequence ID" value="NM_001023378.2"/>
</dbReference>
<dbReference type="SMR" id="O74858"/>
<dbReference type="FunCoup" id="O74858">
    <property type="interactions" value="442"/>
</dbReference>
<dbReference type="STRING" id="284812.O74858"/>
<dbReference type="PaxDb" id="4896-SPCC18.08.1"/>
<dbReference type="EnsemblFungi" id="SPCC18.08.1">
    <property type="protein sequence ID" value="SPCC18.08.1:pep"/>
    <property type="gene ID" value="SPCC18.08"/>
</dbReference>
<dbReference type="GeneID" id="2539141"/>
<dbReference type="KEGG" id="spo:2539141"/>
<dbReference type="PomBase" id="SPCC18.08">
    <property type="gene designation" value="msk1"/>
</dbReference>
<dbReference type="VEuPathDB" id="FungiDB:SPCC18.08"/>
<dbReference type="eggNOG" id="KOG1885">
    <property type="taxonomic scope" value="Eukaryota"/>
</dbReference>
<dbReference type="HOGENOM" id="CLU_008255_6_0_1"/>
<dbReference type="InParanoid" id="O74858"/>
<dbReference type="OMA" id="MQERHVD"/>
<dbReference type="PhylomeDB" id="O74858"/>
<dbReference type="Reactome" id="R-SPO-9856649">
    <property type="pathway name" value="Transcriptional and post-translational regulation of MITF-M expression and activity"/>
</dbReference>
<dbReference type="PRO" id="PR:O74858"/>
<dbReference type="Proteomes" id="UP000002485">
    <property type="component" value="Chromosome III"/>
</dbReference>
<dbReference type="GO" id="GO:0005737">
    <property type="term" value="C:cytoplasm"/>
    <property type="evidence" value="ECO:0000318"/>
    <property type="project" value="GO_Central"/>
</dbReference>
<dbReference type="GO" id="GO:0005759">
    <property type="term" value="C:mitochondrial matrix"/>
    <property type="evidence" value="ECO:0000305"/>
    <property type="project" value="PomBase"/>
</dbReference>
<dbReference type="GO" id="GO:0005739">
    <property type="term" value="C:mitochondrion"/>
    <property type="evidence" value="ECO:0007005"/>
    <property type="project" value="PomBase"/>
</dbReference>
<dbReference type="GO" id="GO:0005524">
    <property type="term" value="F:ATP binding"/>
    <property type="evidence" value="ECO:0000255"/>
    <property type="project" value="PomBase"/>
</dbReference>
<dbReference type="GO" id="GO:0004824">
    <property type="term" value="F:lysine-tRNA ligase activity"/>
    <property type="evidence" value="ECO:0000318"/>
    <property type="project" value="GO_Central"/>
</dbReference>
<dbReference type="GO" id="GO:0046872">
    <property type="term" value="F:metal ion binding"/>
    <property type="evidence" value="ECO:0007669"/>
    <property type="project" value="UniProtKB-KW"/>
</dbReference>
<dbReference type="GO" id="GO:0000049">
    <property type="term" value="F:tRNA binding"/>
    <property type="evidence" value="ECO:0000318"/>
    <property type="project" value="GO_Central"/>
</dbReference>
<dbReference type="GO" id="GO:0006430">
    <property type="term" value="P:lysyl-tRNA aminoacylation"/>
    <property type="evidence" value="ECO:0000318"/>
    <property type="project" value="GO_Central"/>
</dbReference>
<dbReference type="GO" id="GO:0032543">
    <property type="term" value="P:mitochondrial translation"/>
    <property type="evidence" value="ECO:0000303"/>
    <property type="project" value="PomBase"/>
</dbReference>
<dbReference type="CDD" id="cd04322">
    <property type="entry name" value="LysRS_N"/>
    <property type="match status" value="1"/>
</dbReference>
<dbReference type="Gene3D" id="3.30.930.10">
    <property type="entry name" value="Bira Bifunctional Protein, Domain 2"/>
    <property type="match status" value="1"/>
</dbReference>
<dbReference type="Gene3D" id="2.40.50.140">
    <property type="entry name" value="Nucleic acid-binding proteins"/>
    <property type="match status" value="1"/>
</dbReference>
<dbReference type="InterPro" id="IPR004364">
    <property type="entry name" value="Aa-tRNA-synt_II"/>
</dbReference>
<dbReference type="InterPro" id="IPR006195">
    <property type="entry name" value="aa-tRNA-synth_II"/>
</dbReference>
<dbReference type="InterPro" id="IPR045864">
    <property type="entry name" value="aa-tRNA-synth_II/BPL/LPL"/>
</dbReference>
<dbReference type="InterPro" id="IPR002313">
    <property type="entry name" value="Lys-tRNA-ligase_II"/>
</dbReference>
<dbReference type="InterPro" id="IPR044136">
    <property type="entry name" value="Lys-tRNA-ligase_II_N"/>
</dbReference>
<dbReference type="InterPro" id="IPR018149">
    <property type="entry name" value="Lys-tRNA-synth_II_C"/>
</dbReference>
<dbReference type="InterPro" id="IPR012340">
    <property type="entry name" value="NA-bd_OB-fold"/>
</dbReference>
<dbReference type="InterPro" id="IPR004365">
    <property type="entry name" value="NA-bd_OB_tRNA"/>
</dbReference>
<dbReference type="NCBIfam" id="TIGR00499">
    <property type="entry name" value="lysS_bact"/>
    <property type="match status" value="1"/>
</dbReference>
<dbReference type="PANTHER" id="PTHR42918:SF5">
    <property type="entry name" value="LYSINE--TRNA LIGASE, MITOCHONDRIAL"/>
    <property type="match status" value="1"/>
</dbReference>
<dbReference type="PANTHER" id="PTHR42918">
    <property type="entry name" value="LYSYL-TRNA SYNTHETASE"/>
    <property type="match status" value="1"/>
</dbReference>
<dbReference type="Pfam" id="PF00152">
    <property type="entry name" value="tRNA-synt_2"/>
    <property type="match status" value="1"/>
</dbReference>
<dbReference type="Pfam" id="PF01336">
    <property type="entry name" value="tRNA_anti-codon"/>
    <property type="match status" value="1"/>
</dbReference>
<dbReference type="PRINTS" id="PR00982">
    <property type="entry name" value="TRNASYNTHLYS"/>
</dbReference>
<dbReference type="SUPFAM" id="SSF55681">
    <property type="entry name" value="Class II aaRS and biotin synthetases"/>
    <property type="match status" value="1"/>
</dbReference>
<dbReference type="SUPFAM" id="SSF50249">
    <property type="entry name" value="Nucleic acid-binding proteins"/>
    <property type="match status" value="1"/>
</dbReference>
<dbReference type="PROSITE" id="PS50862">
    <property type="entry name" value="AA_TRNA_LIGASE_II"/>
    <property type="match status" value="1"/>
</dbReference>
<comment type="catalytic activity">
    <reaction>
        <text>tRNA(Lys) + L-lysine + ATP = L-lysyl-tRNA(Lys) + AMP + diphosphate</text>
        <dbReference type="Rhea" id="RHEA:20792"/>
        <dbReference type="Rhea" id="RHEA-COMP:9696"/>
        <dbReference type="Rhea" id="RHEA-COMP:9697"/>
        <dbReference type="ChEBI" id="CHEBI:30616"/>
        <dbReference type="ChEBI" id="CHEBI:32551"/>
        <dbReference type="ChEBI" id="CHEBI:33019"/>
        <dbReference type="ChEBI" id="CHEBI:78442"/>
        <dbReference type="ChEBI" id="CHEBI:78529"/>
        <dbReference type="ChEBI" id="CHEBI:456215"/>
        <dbReference type="EC" id="6.1.1.6"/>
    </reaction>
</comment>
<comment type="subcellular location">
    <subcellularLocation>
        <location evidence="1">Mitochondrion</location>
    </subcellularLocation>
</comment>
<comment type="similarity">
    <text evidence="2">Belongs to the class-II aminoacyl-tRNA synthetase family.</text>
</comment>